<keyword id="KW-0963">Cytoplasm</keyword>
<keyword id="KW-0653">Protein transport</keyword>
<keyword id="KW-1185">Reference proteome</keyword>
<keyword id="KW-0677">Repeat</keyword>
<keyword id="KW-0813">Transport</keyword>
<accession>Q9FYP9</accession>
<accession>O80332</accession>
<accession>Q0JQJ0</accession>
<protein>
    <recommendedName>
        <fullName>Importin subunit alpha-2</fullName>
    </recommendedName>
</protein>
<proteinExistence type="evidence at transcript level"/>
<sequence>MADDSASPSPSSASPLQHHREALKSSVRNTAASRRREQAIAIGKERREALIRAKRVCRAPISGSDEAEMEEGDMVVDEEKACLEAKTAHAVEELKSALSIQGKGVQKKKIEALRDLRRLLSQPEVPLVDTAIKAGAVPLLVQYLSFGSSDEQLLEAAWCLTNIAAGEPEETKSLLPALPLLIAHLGEKSSTLVAEQCAWAIGNVAGEGAELRSTLLAQGALRPLTRLMFSSKGSTARTAAWAMSNLIKGPDPKAANELITIDGVLNAIIASLEKEDEELATEVAWVVVYLSALSDRGISLIVRSSVPQLLIGRLFSSENLQLLIPVLRGLGNLIAADDYMVDSVLTVGHNIIDQALSGLIKCLKSDNRVLRKESSWALSNIAAGSFEHKKLIFASEATPVLIRLVTSMQFDIRREAAYTLGNLCVVPTGNCELPKIIVEHLVAIVDGGALPGFIHLVRSADVDTAGLGLQFLELVMRGYPNKQGPKLVEMEDGIEAMERFQFHENEQMRNMANGLVDEYFGEDYGLDE</sequence>
<dbReference type="EMBL" id="D78504">
    <property type="protein sequence ID" value="BAA31220.1"/>
    <property type="molecule type" value="mRNA"/>
</dbReference>
<dbReference type="EMBL" id="AB006788">
    <property type="protein sequence ID" value="BAA31222.1"/>
    <property type="molecule type" value="Genomic_DNA"/>
</dbReference>
<dbReference type="EMBL" id="AP002539">
    <property type="protein sequence ID" value="BAB08186.1"/>
    <property type="status" value="ALT_SEQ"/>
    <property type="molecule type" value="Genomic_DNA"/>
</dbReference>
<dbReference type="EMBL" id="AP003225">
    <property type="protein sequence ID" value="BAB64664.1"/>
    <property type="status" value="ALT_SEQ"/>
    <property type="molecule type" value="Genomic_DNA"/>
</dbReference>
<dbReference type="EMBL" id="AP008207">
    <property type="protein sequence ID" value="BAF03988.1"/>
    <property type="molecule type" value="Genomic_DNA"/>
</dbReference>
<dbReference type="EMBL" id="AP014957">
    <property type="protein sequence ID" value="BAS70498.1"/>
    <property type="molecule type" value="Genomic_DNA"/>
</dbReference>
<dbReference type="EMBL" id="AK103127">
    <property type="protein sequence ID" value="BAG95907.1"/>
    <property type="molecule type" value="mRNA"/>
</dbReference>
<dbReference type="PIR" id="T02972">
    <property type="entry name" value="T02972"/>
</dbReference>
<dbReference type="RefSeq" id="XP_015619230.1">
    <property type="nucleotide sequence ID" value="XM_015763744.1"/>
</dbReference>
<dbReference type="SMR" id="Q9FYP9"/>
<dbReference type="FunCoup" id="Q9FYP9">
    <property type="interactions" value="189"/>
</dbReference>
<dbReference type="STRING" id="39947.Q9FYP9"/>
<dbReference type="PaxDb" id="39947-Q9FYP9"/>
<dbReference type="EnsemblPlants" id="Os01t0158000-01">
    <property type="protein sequence ID" value="Os01t0158000-01"/>
    <property type="gene ID" value="Os01g0158000"/>
</dbReference>
<dbReference type="EnsemblPlants" id="Os01t0158000-02">
    <property type="protein sequence ID" value="Os01t0158000-02"/>
    <property type="gene ID" value="Os01g0158000"/>
</dbReference>
<dbReference type="Gramene" id="Os01t0158000-01">
    <property type="protein sequence ID" value="Os01t0158000-01"/>
    <property type="gene ID" value="Os01g0158000"/>
</dbReference>
<dbReference type="Gramene" id="Os01t0158000-02">
    <property type="protein sequence ID" value="Os01t0158000-02"/>
    <property type="gene ID" value="Os01g0158000"/>
</dbReference>
<dbReference type="KEGG" id="dosa:Os01g0158000"/>
<dbReference type="eggNOG" id="KOG0166">
    <property type="taxonomic scope" value="Eukaryota"/>
</dbReference>
<dbReference type="HOGENOM" id="CLU_516194_0_0_1"/>
<dbReference type="InParanoid" id="Q9FYP9"/>
<dbReference type="OMA" id="QMRNMAN"/>
<dbReference type="OrthoDB" id="29145at2759"/>
<dbReference type="Proteomes" id="UP000000763">
    <property type="component" value="Chromosome 1"/>
</dbReference>
<dbReference type="Proteomes" id="UP000059680">
    <property type="component" value="Chromosome 1"/>
</dbReference>
<dbReference type="GO" id="GO:0005634">
    <property type="term" value="C:nucleus"/>
    <property type="evidence" value="ECO:0000318"/>
    <property type="project" value="GO_Central"/>
</dbReference>
<dbReference type="GO" id="GO:0048471">
    <property type="term" value="C:perinuclear region of cytoplasm"/>
    <property type="evidence" value="ECO:0007669"/>
    <property type="project" value="UniProtKB-SubCell"/>
</dbReference>
<dbReference type="GO" id="GO:0061608">
    <property type="term" value="F:nuclear import signal receptor activity"/>
    <property type="evidence" value="ECO:0000318"/>
    <property type="project" value="GO_Central"/>
</dbReference>
<dbReference type="GO" id="GO:0008139">
    <property type="term" value="F:nuclear localization sequence binding"/>
    <property type="evidence" value="ECO:0000318"/>
    <property type="project" value="GO_Central"/>
</dbReference>
<dbReference type="GO" id="GO:0006607">
    <property type="term" value="P:NLS-bearing protein import into nucleus"/>
    <property type="evidence" value="ECO:0000318"/>
    <property type="project" value="GO_Central"/>
</dbReference>
<dbReference type="FunFam" id="1.25.10.10:FF:000222">
    <property type="entry name" value="Importin subunit alpha"/>
    <property type="match status" value="1"/>
</dbReference>
<dbReference type="Gene3D" id="1.25.10.10">
    <property type="entry name" value="Leucine-rich Repeat Variant"/>
    <property type="match status" value="1"/>
</dbReference>
<dbReference type="InterPro" id="IPR011989">
    <property type="entry name" value="ARM-like"/>
</dbReference>
<dbReference type="InterPro" id="IPR016024">
    <property type="entry name" value="ARM-type_fold"/>
</dbReference>
<dbReference type="InterPro" id="IPR000225">
    <property type="entry name" value="Armadillo"/>
</dbReference>
<dbReference type="InterPro" id="IPR024931">
    <property type="entry name" value="Importin_alpha"/>
</dbReference>
<dbReference type="PANTHER" id="PTHR23316">
    <property type="entry name" value="IMPORTIN ALPHA"/>
    <property type="match status" value="1"/>
</dbReference>
<dbReference type="Pfam" id="PF00514">
    <property type="entry name" value="Arm"/>
    <property type="match status" value="4"/>
</dbReference>
<dbReference type="PIRSF" id="PIRSF005673">
    <property type="entry name" value="Importin_alpha"/>
    <property type="match status" value="1"/>
</dbReference>
<dbReference type="SMART" id="SM00185">
    <property type="entry name" value="ARM"/>
    <property type="match status" value="6"/>
</dbReference>
<dbReference type="SUPFAM" id="SSF48371">
    <property type="entry name" value="ARM repeat"/>
    <property type="match status" value="1"/>
</dbReference>
<gene>
    <name type="ordered locus">Os01g0158000</name>
    <name type="ordered locus">LOC_Os01g06470</name>
    <name type="ORF">P0011G08.44</name>
</gene>
<reference key="1">
    <citation type="journal article" date="1998" name="FEBS Lett.">
        <title>A novel importin alpha from rice, a component involved in the process of nuclear protein transport.</title>
        <authorList>
            <person name="Iwasaki T."/>
            <person name="Matsuki R."/>
            <person name="Shoji K."/>
            <person name="Sanmiya K."/>
            <person name="Miyao M."/>
            <person name="Yamamoto N."/>
        </authorList>
    </citation>
    <scope>NUCLEOTIDE SEQUENCE [GENOMIC DNA / MRNA]</scope>
    <scope>TISSUE SPECIFICITY</scope>
    <source>
        <strain>cv. Nipponbare</strain>
    </source>
</reference>
<reference key="2">
    <citation type="journal article" date="2002" name="Nature">
        <title>The genome sequence and structure of rice chromosome 1.</title>
        <authorList>
            <person name="Sasaki T."/>
            <person name="Matsumoto T."/>
            <person name="Yamamoto K."/>
            <person name="Sakata K."/>
            <person name="Baba T."/>
            <person name="Katayose Y."/>
            <person name="Wu J."/>
            <person name="Niimura Y."/>
            <person name="Cheng Z."/>
            <person name="Nagamura Y."/>
            <person name="Antonio B.A."/>
            <person name="Kanamori H."/>
            <person name="Hosokawa S."/>
            <person name="Masukawa M."/>
            <person name="Arikawa K."/>
            <person name="Chiden Y."/>
            <person name="Hayashi M."/>
            <person name="Okamoto M."/>
            <person name="Ando T."/>
            <person name="Aoki H."/>
            <person name="Arita K."/>
            <person name="Hamada M."/>
            <person name="Harada C."/>
            <person name="Hijishita S."/>
            <person name="Honda M."/>
            <person name="Ichikawa Y."/>
            <person name="Idonuma A."/>
            <person name="Iijima M."/>
            <person name="Ikeda M."/>
            <person name="Ikeno M."/>
            <person name="Ito S."/>
            <person name="Ito T."/>
            <person name="Ito Y."/>
            <person name="Ito Y."/>
            <person name="Iwabuchi A."/>
            <person name="Kamiya K."/>
            <person name="Karasawa W."/>
            <person name="Katagiri S."/>
            <person name="Kikuta A."/>
            <person name="Kobayashi N."/>
            <person name="Kono I."/>
            <person name="Machita K."/>
            <person name="Maehara T."/>
            <person name="Mizuno H."/>
            <person name="Mizubayashi T."/>
            <person name="Mukai Y."/>
            <person name="Nagasaki H."/>
            <person name="Nakashima M."/>
            <person name="Nakama Y."/>
            <person name="Nakamichi Y."/>
            <person name="Nakamura M."/>
            <person name="Namiki N."/>
            <person name="Negishi M."/>
            <person name="Ohta I."/>
            <person name="Ono N."/>
            <person name="Saji S."/>
            <person name="Sakai K."/>
            <person name="Shibata M."/>
            <person name="Shimokawa T."/>
            <person name="Shomura A."/>
            <person name="Song J."/>
            <person name="Takazaki Y."/>
            <person name="Terasawa K."/>
            <person name="Tsuji K."/>
            <person name="Waki K."/>
            <person name="Yamagata H."/>
            <person name="Yamane H."/>
            <person name="Yoshiki S."/>
            <person name="Yoshihara R."/>
            <person name="Yukawa K."/>
            <person name="Zhong H."/>
            <person name="Iwama H."/>
            <person name="Endo T."/>
            <person name="Ito H."/>
            <person name="Hahn J.H."/>
            <person name="Kim H.-I."/>
            <person name="Eun M.-Y."/>
            <person name="Yano M."/>
            <person name="Jiang J."/>
            <person name="Gojobori T."/>
        </authorList>
    </citation>
    <scope>NUCLEOTIDE SEQUENCE [LARGE SCALE GENOMIC DNA]</scope>
    <source>
        <strain>cv. Nipponbare</strain>
    </source>
</reference>
<reference key="3">
    <citation type="journal article" date="2005" name="Nature">
        <title>The map-based sequence of the rice genome.</title>
        <authorList>
            <consortium name="International rice genome sequencing project (IRGSP)"/>
        </authorList>
    </citation>
    <scope>NUCLEOTIDE SEQUENCE [LARGE SCALE GENOMIC DNA]</scope>
    <source>
        <strain>cv. Nipponbare</strain>
    </source>
</reference>
<reference key="4">
    <citation type="journal article" date="2008" name="Nucleic Acids Res.">
        <title>The rice annotation project database (RAP-DB): 2008 update.</title>
        <authorList>
            <consortium name="The rice annotation project (RAP)"/>
        </authorList>
    </citation>
    <scope>GENOME REANNOTATION</scope>
    <source>
        <strain>cv. Nipponbare</strain>
    </source>
</reference>
<reference key="5">
    <citation type="journal article" date="2013" name="Rice">
        <title>Improvement of the Oryza sativa Nipponbare reference genome using next generation sequence and optical map data.</title>
        <authorList>
            <person name="Kawahara Y."/>
            <person name="de la Bastide M."/>
            <person name="Hamilton J.P."/>
            <person name="Kanamori H."/>
            <person name="McCombie W.R."/>
            <person name="Ouyang S."/>
            <person name="Schwartz D.C."/>
            <person name="Tanaka T."/>
            <person name="Wu J."/>
            <person name="Zhou S."/>
            <person name="Childs K.L."/>
            <person name="Davidson R.M."/>
            <person name="Lin H."/>
            <person name="Quesada-Ocampo L."/>
            <person name="Vaillancourt B."/>
            <person name="Sakai H."/>
            <person name="Lee S.S."/>
            <person name="Kim J."/>
            <person name="Numa H."/>
            <person name="Itoh T."/>
            <person name="Buell C.R."/>
            <person name="Matsumoto T."/>
        </authorList>
    </citation>
    <scope>GENOME REANNOTATION</scope>
    <source>
        <strain>cv. Nipponbare</strain>
    </source>
</reference>
<reference key="6">
    <citation type="journal article" date="2003" name="Science">
        <title>Collection, mapping, and annotation of over 28,000 cDNA clones from japonica rice.</title>
        <authorList>
            <consortium name="The rice full-length cDNA consortium"/>
        </authorList>
    </citation>
    <scope>NUCLEOTIDE SEQUENCE [LARGE SCALE MRNA]</scope>
    <source>
        <strain>cv. Nipponbare</strain>
    </source>
</reference>
<reference key="7">
    <citation type="journal article" date="2001" name="J. Biol. Chem.">
        <title>Molecular cloning of a novel importin alpha homologue from rice, by which constitutive photomorphogenic 1 (COP1) nuclear localization signal (NLS)-protein is preferentially nuclear imported.</title>
        <authorList>
            <person name="Jiang C.-J."/>
            <person name="Shoji K."/>
            <person name="Matsuki R."/>
            <person name="Baba A."/>
            <person name="Inagaki N."/>
            <person name="Ban H."/>
            <person name="Iwasaki T."/>
            <person name="Imamoto N."/>
            <person name="Yoneda Y."/>
            <person name="Deng X.-W."/>
            <person name="Yamamoto N."/>
        </authorList>
    </citation>
    <scope>FUNCTION</scope>
    <scope>TISSUE SPECIFICITY</scope>
    <scope>INDUCTION</scope>
</reference>
<name>IMAP2_ORYSJ</name>
<evidence type="ECO:0000256" key="1">
    <source>
        <dbReference type="SAM" id="MobiDB-lite"/>
    </source>
</evidence>
<evidence type="ECO:0000269" key="2">
    <source>
    </source>
</evidence>
<evidence type="ECO:0000269" key="3">
    <source>
    </source>
</evidence>
<evidence type="ECO:0000305" key="4"/>
<organism>
    <name type="scientific">Oryza sativa subsp. japonica</name>
    <name type="common">Rice</name>
    <dbReference type="NCBI Taxonomy" id="39947"/>
    <lineage>
        <taxon>Eukaryota</taxon>
        <taxon>Viridiplantae</taxon>
        <taxon>Streptophyta</taxon>
        <taxon>Embryophyta</taxon>
        <taxon>Tracheophyta</taxon>
        <taxon>Spermatophyta</taxon>
        <taxon>Magnoliopsida</taxon>
        <taxon>Liliopsida</taxon>
        <taxon>Poales</taxon>
        <taxon>Poaceae</taxon>
        <taxon>BOP clade</taxon>
        <taxon>Oryzoideae</taxon>
        <taxon>Oryzeae</taxon>
        <taxon>Oryzinae</taxon>
        <taxon>Oryza</taxon>
        <taxon>Oryza sativa</taxon>
    </lineage>
</organism>
<comment type="function">
    <text evidence="2">Binds specifically and directly to substrates containing either a simple or bipartite NLS motif. Promotes docking of import substrates to the nuclear envelope.</text>
</comment>
<comment type="subunit">
    <text>Forms a complex with importin subunit beta-1. The whole complex, most stable and composed of importin alpha, importin beta and NLS substrate, is referred to as PTAC or pore targeting complex.</text>
</comment>
<comment type="subcellular location">
    <subcellularLocation>
        <location>Cytoplasm</location>
        <location>Perinuclear region</location>
    </subcellularLocation>
</comment>
<comment type="tissue specificity">
    <text evidence="2 3">Expressed in root, callus, and etiolated leaf. Low expression in green leaf.</text>
</comment>
<comment type="induction">
    <text evidence="2">By dark in green leaf. Down-regulated by light.</text>
</comment>
<comment type="similarity">
    <text evidence="4">Belongs to the importin alpha family.</text>
</comment>
<comment type="sequence caution" evidence="4">
    <conflict type="erroneous gene model prediction">
        <sequence resource="EMBL-CDS" id="BAB08186"/>
    </conflict>
</comment>
<comment type="sequence caution" evidence="4">
    <conflict type="erroneous gene model prediction">
        <sequence resource="EMBL-CDS" id="BAB64664"/>
    </conflict>
</comment>
<feature type="chain" id="PRO_0000120742" description="Importin subunit alpha-2">
    <location>
        <begin position="1"/>
        <end position="528"/>
    </location>
</feature>
<feature type="repeat" description="ARM 1">
    <location>
        <begin position="125"/>
        <end position="165"/>
    </location>
</feature>
<feature type="repeat" description="ARM 2">
    <location>
        <begin position="167"/>
        <end position="206"/>
    </location>
</feature>
<feature type="repeat" description="ARM 3">
    <location>
        <begin position="209"/>
        <end position="248"/>
    </location>
</feature>
<feature type="repeat" description="ARM 4">
    <location>
        <begin position="253"/>
        <end position="292"/>
    </location>
</feature>
<feature type="repeat" description="ARM 5">
    <location>
        <begin position="294"/>
        <end position="335"/>
    </location>
</feature>
<feature type="repeat" description="ARM 6">
    <location>
        <begin position="338"/>
        <end position="383"/>
    </location>
</feature>
<feature type="repeat" description="ARM 7">
    <location>
        <begin position="386"/>
        <end position="425"/>
    </location>
</feature>
<feature type="repeat" description="ARM 8">
    <location>
        <begin position="438"/>
        <end position="477"/>
    </location>
</feature>
<feature type="region of interest" description="Disordered" evidence="1">
    <location>
        <begin position="1"/>
        <end position="36"/>
    </location>
</feature>
<feature type="compositionally biased region" description="Low complexity" evidence="1">
    <location>
        <begin position="1"/>
        <end position="15"/>
    </location>
</feature>
<feature type="sequence conflict" description="In Ref. 1; BAA31220." evidence="4" ref="1">
    <original>S</original>
    <variation>N</variation>
    <location>
        <position position="231"/>
    </location>
</feature>
<feature type="sequence conflict" description="In Ref. 1; BAA31220." evidence="4" ref="1">
    <original>H</original>
    <variation>N</variation>
    <location>
        <position position="349"/>
    </location>
</feature>
<feature type="sequence conflict" description="In Ref. 1; BAA31220." evidence="4" ref="1">
    <original>M</original>
    <variation>A</variation>
    <location>
        <position position="408"/>
    </location>
</feature>